<evidence type="ECO:0000255" key="1">
    <source>
        <dbReference type="HAMAP-Rule" id="MF_01365"/>
    </source>
</evidence>
<evidence type="ECO:0000305" key="2"/>
<organism>
    <name type="scientific">Burkholderia mallei (strain NCTC 10247)</name>
    <dbReference type="NCBI Taxonomy" id="320389"/>
    <lineage>
        <taxon>Bacteria</taxon>
        <taxon>Pseudomonadati</taxon>
        <taxon>Pseudomonadota</taxon>
        <taxon>Betaproteobacteria</taxon>
        <taxon>Burkholderiales</taxon>
        <taxon>Burkholderiaceae</taxon>
        <taxon>Burkholderia</taxon>
        <taxon>pseudomallei group</taxon>
    </lineage>
</organism>
<sequence length="176" mass="18676">MSRVGKSPIALQGAEVKLADGAITVKGPLGTITQAVNPLVNVANNDGTLNLSPVDDSREANALSGTMRAIIANAVHGVTKGFERKLTLVGVGYRAQAQGDKLNLSLGFSHPVVHQMPEGIKAETPTQTEIVIKGIDKQKVGQVAAEVRGYRPPEPYKGKGVRYADEVVILKETKKK</sequence>
<proteinExistence type="inferred from homology"/>
<name>RL6_BURM7</name>
<gene>
    <name evidence="1" type="primary">rplF</name>
    <name type="ordered locus">BMA10247_3493</name>
</gene>
<comment type="function">
    <text evidence="1">This protein binds to the 23S rRNA, and is important in its secondary structure. It is located near the subunit interface in the base of the L7/L12 stalk, and near the tRNA binding site of the peptidyltransferase center.</text>
</comment>
<comment type="subunit">
    <text evidence="1">Part of the 50S ribosomal subunit.</text>
</comment>
<comment type="similarity">
    <text evidence="1">Belongs to the universal ribosomal protein uL6 family.</text>
</comment>
<keyword id="KW-0687">Ribonucleoprotein</keyword>
<keyword id="KW-0689">Ribosomal protein</keyword>
<keyword id="KW-0694">RNA-binding</keyword>
<keyword id="KW-0699">rRNA-binding</keyword>
<accession>A3MRW9</accession>
<protein>
    <recommendedName>
        <fullName evidence="1">Large ribosomal subunit protein uL6</fullName>
    </recommendedName>
    <alternativeName>
        <fullName evidence="2">50S ribosomal protein L6</fullName>
    </alternativeName>
</protein>
<reference key="1">
    <citation type="journal article" date="2010" name="Genome Biol. Evol.">
        <title>Continuing evolution of Burkholderia mallei through genome reduction and large-scale rearrangements.</title>
        <authorList>
            <person name="Losada L."/>
            <person name="Ronning C.M."/>
            <person name="DeShazer D."/>
            <person name="Woods D."/>
            <person name="Fedorova N."/>
            <person name="Kim H.S."/>
            <person name="Shabalina S.A."/>
            <person name="Pearson T.R."/>
            <person name="Brinkac L."/>
            <person name="Tan P."/>
            <person name="Nandi T."/>
            <person name="Crabtree J."/>
            <person name="Badger J."/>
            <person name="Beckstrom-Sternberg S."/>
            <person name="Saqib M."/>
            <person name="Schutzer S.E."/>
            <person name="Keim P."/>
            <person name="Nierman W.C."/>
        </authorList>
    </citation>
    <scope>NUCLEOTIDE SEQUENCE [LARGE SCALE GENOMIC DNA]</scope>
    <source>
        <strain>NCTC 10247</strain>
    </source>
</reference>
<feature type="chain" id="PRO_1000055204" description="Large ribosomal subunit protein uL6">
    <location>
        <begin position="1"/>
        <end position="176"/>
    </location>
</feature>
<dbReference type="EMBL" id="CP000548">
    <property type="protein sequence ID" value="ABO05941.1"/>
    <property type="molecule type" value="Genomic_DNA"/>
</dbReference>
<dbReference type="RefSeq" id="WP_004197947.1">
    <property type="nucleotide sequence ID" value="NZ_CP007802.1"/>
</dbReference>
<dbReference type="SMR" id="A3MRW9"/>
<dbReference type="GeneID" id="93061817"/>
<dbReference type="KEGG" id="bmaz:BM44_3026"/>
<dbReference type="KEGG" id="bmn:BMA10247_3493"/>
<dbReference type="PATRIC" id="fig|320389.8.peg.3398"/>
<dbReference type="GO" id="GO:0022625">
    <property type="term" value="C:cytosolic large ribosomal subunit"/>
    <property type="evidence" value="ECO:0007669"/>
    <property type="project" value="TreeGrafter"/>
</dbReference>
<dbReference type="GO" id="GO:0019843">
    <property type="term" value="F:rRNA binding"/>
    <property type="evidence" value="ECO:0007669"/>
    <property type="project" value="UniProtKB-UniRule"/>
</dbReference>
<dbReference type="GO" id="GO:0003735">
    <property type="term" value="F:structural constituent of ribosome"/>
    <property type="evidence" value="ECO:0007669"/>
    <property type="project" value="InterPro"/>
</dbReference>
<dbReference type="GO" id="GO:0002181">
    <property type="term" value="P:cytoplasmic translation"/>
    <property type="evidence" value="ECO:0007669"/>
    <property type="project" value="TreeGrafter"/>
</dbReference>
<dbReference type="FunFam" id="3.90.930.12:FF:000001">
    <property type="entry name" value="50S ribosomal protein L6"/>
    <property type="match status" value="1"/>
</dbReference>
<dbReference type="Gene3D" id="3.90.930.12">
    <property type="entry name" value="Ribosomal protein L6, alpha-beta domain"/>
    <property type="match status" value="2"/>
</dbReference>
<dbReference type="HAMAP" id="MF_01365_B">
    <property type="entry name" value="Ribosomal_uL6_B"/>
    <property type="match status" value="1"/>
</dbReference>
<dbReference type="InterPro" id="IPR000702">
    <property type="entry name" value="Ribosomal_uL6-like"/>
</dbReference>
<dbReference type="InterPro" id="IPR036789">
    <property type="entry name" value="Ribosomal_uL6-like_a/b-dom_sf"/>
</dbReference>
<dbReference type="InterPro" id="IPR020040">
    <property type="entry name" value="Ribosomal_uL6_a/b-dom"/>
</dbReference>
<dbReference type="InterPro" id="IPR019906">
    <property type="entry name" value="Ribosomal_uL6_bac-type"/>
</dbReference>
<dbReference type="InterPro" id="IPR002358">
    <property type="entry name" value="Ribosomal_uL6_CS"/>
</dbReference>
<dbReference type="NCBIfam" id="TIGR03654">
    <property type="entry name" value="L6_bact"/>
    <property type="match status" value="1"/>
</dbReference>
<dbReference type="PANTHER" id="PTHR11655">
    <property type="entry name" value="60S/50S RIBOSOMAL PROTEIN L6/L9"/>
    <property type="match status" value="1"/>
</dbReference>
<dbReference type="PANTHER" id="PTHR11655:SF14">
    <property type="entry name" value="LARGE RIBOSOMAL SUBUNIT PROTEIN UL6M"/>
    <property type="match status" value="1"/>
</dbReference>
<dbReference type="Pfam" id="PF00347">
    <property type="entry name" value="Ribosomal_L6"/>
    <property type="match status" value="2"/>
</dbReference>
<dbReference type="PIRSF" id="PIRSF002162">
    <property type="entry name" value="Ribosomal_L6"/>
    <property type="match status" value="1"/>
</dbReference>
<dbReference type="PRINTS" id="PR00059">
    <property type="entry name" value="RIBOSOMALL6"/>
</dbReference>
<dbReference type="SUPFAM" id="SSF56053">
    <property type="entry name" value="Ribosomal protein L6"/>
    <property type="match status" value="2"/>
</dbReference>
<dbReference type="PROSITE" id="PS00525">
    <property type="entry name" value="RIBOSOMAL_L6_1"/>
    <property type="match status" value="1"/>
</dbReference>